<accession>P0CI91</accession>
<feature type="signal peptide" evidence="3">
    <location>
        <begin position="1"/>
        <end position="23"/>
    </location>
</feature>
<feature type="peptide" id="PRO_0000403866" description="Ponericin-W-like 32.1">
    <location>
        <begin position="24"/>
        <end position="48"/>
    </location>
</feature>
<feature type="propeptide" id="PRO_0000403867" evidence="1">
    <location>
        <begin position="49"/>
        <end position="79"/>
    </location>
</feature>
<comment type="function">
    <text evidence="2">Antimicrobial peptide with potent activity against a range of Gram-positive and Gram-negative bacteria. Has high hemolytic activity against erythrocytes. May act by disrupting the integrity of the bacterial cell membrane.</text>
</comment>
<comment type="subcellular location">
    <subcellularLocation>
        <location evidence="5">Secreted</location>
    </subcellularLocation>
    <subcellularLocation>
        <location evidence="2">Target cell membrane</location>
    </subcellularLocation>
</comment>
<comment type="tissue specificity">
    <text evidence="5">Expressed by the venom gland.</text>
</comment>
<comment type="similarity">
    <text evidence="4">Belongs to the non-disulfide-bridged peptide (NDBP) superfamily. Medium-length antimicrobial peptide (group 3) family. Ponericin-W subfamily.</text>
</comment>
<keyword id="KW-0044">Antibiotic</keyword>
<keyword id="KW-0929">Antimicrobial</keyword>
<keyword id="KW-0204">Cytolysis</keyword>
<keyword id="KW-0295">Fungicide</keyword>
<keyword id="KW-0354">Hemolysis</keyword>
<keyword id="KW-0472">Membrane</keyword>
<keyword id="KW-0964">Secreted</keyword>
<keyword id="KW-0732">Signal</keyword>
<keyword id="KW-1052">Target cell membrane</keyword>
<keyword id="KW-1053">Target membrane</keyword>
<keyword id="KW-0800">Toxin</keyword>
<evidence type="ECO:0000250" key="1"/>
<evidence type="ECO:0000250" key="2">
    <source>
        <dbReference type="UniProtKB" id="P0DRB5"/>
    </source>
</evidence>
<evidence type="ECO:0000255" key="3"/>
<evidence type="ECO:0000305" key="4"/>
<evidence type="ECO:0000305" key="5">
    <source>
    </source>
</evidence>
<organism>
    <name type="scientific">Lychas mucronatus</name>
    <name type="common">Chinese swimming scorpion</name>
    <dbReference type="NCBI Taxonomy" id="172552"/>
    <lineage>
        <taxon>Eukaryota</taxon>
        <taxon>Metazoa</taxon>
        <taxon>Ecdysozoa</taxon>
        <taxon>Arthropoda</taxon>
        <taxon>Chelicerata</taxon>
        <taxon>Arachnida</taxon>
        <taxon>Scorpiones</taxon>
        <taxon>Buthida</taxon>
        <taxon>Buthoidea</taxon>
        <taxon>Buthidae</taxon>
        <taxon>Lychas</taxon>
    </lineage>
</organism>
<reference key="1">
    <citation type="journal article" date="2010" name="BMC Genomics">
        <title>Comparative venom gland transcriptome analysis of the scorpion Lychas mucronatus reveals intraspecific toxic gene diversity and new venomous components.</title>
        <authorList>
            <person name="Zhao R."/>
            <person name="Ma Y."/>
            <person name="He Y."/>
            <person name="Di Z."/>
            <person name="Wu Y.-L."/>
            <person name="Cao Z.-J."/>
            <person name="Li W.-X."/>
        </authorList>
    </citation>
    <scope>NUCLEOTIDE SEQUENCE [MRNA]</scope>
    <source>
        <strain>Yunnan</strain>
        <tissue>Venom gland</tissue>
    </source>
</reference>
<proteinExistence type="inferred from homology"/>
<protein>
    <recommendedName>
        <fullName>Ponericin-W-like 32.1</fullName>
    </recommendedName>
</protein>
<dbReference type="EMBL" id="GT028819">
    <property type="status" value="NOT_ANNOTATED_CDS"/>
    <property type="molecule type" value="mRNA"/>
</dbReference>
<dbReference type="GO" id="GO:0005576">
    <property type="term" value="C:extracellular region"/>
    <property type="evidence" value="ECO:0007669"/>
    <property type="project" value="UniProtKB-SubCell"/>
</dbReference>
<dbReference type="GO" id="GO:0016020">
    <property type="term" value="C:membrane"/>
    <property type="evidence" value="ECO:0007669"/>
    <property type="project" value="UniProtKB-KW"/>
</dbReference>
<dbReference type="GO" id="GO:0044218">
    <property type="term" value="C:other organism cell membrane"/>
    <property type="evidence" value="ECO:0007669"/>
    <property type="project" value="UniProtKB-KW"/>
</dbReference>
<dbReference type="GO" id="GO:0090729">
    <property type="term" value="F:toxin activity"/>
    <property type="evidence" value="ECO:0007669"/>
    <property type="project" value="UniProtKB-KW"/>
</dbReference>
<dbReference type="GO" id="GO:0042742">
    <property type="term" value="P:defense response to bacterium"/>
    <property type="evidence" value="ECO:0007669"/>
    <property type="project" value="UniProtKB-KW"/>
</dbReference>
<dbReference type="GO" id="GO:0050832">
    <property type="term" value="P:defense response to fungus"/>
    <property type="evidence" value="ECO:0007669"/>
    <property type="project" value="UniProtKB-KW"/>
</dbReference>
<dbReference type="GO" id="GO:0031640">
    <property type="term" value="P:killing of cells of another organism"/>
    <property type="evidence" value="ECO:0007669"/>
    <property type="project" value="UniProtKB-KW"/>
</dbReference>
<sequence length="79" mass="9395">MKCKKQLLVIFFAYFLVVNESEAIFGSLFSLGSKLLPSVFKLFSRKKQRALMKRDLEDIMDPYQKNLKLDRYLRRLAMD</sequence>
<name>NDBW1_LYCMC</name>